<comment type="function">
    <text evidence="1">Specifically methylates position 2 of adenine 2503 in 23S rRNA and position 2 of adenine 37 in tRNAs. m2A2503 modification seems to play a crucial role in the proofreading step occurring at the peptidyl transferase center and thus would serve to optimize ribosomal fidelity.</text>
</comment>
<comment type="catalytic activity">
    <reaction evidence="1">
        <text>adenosine(2503) in 23S rRNA + 2 reduced [2Fe-2S]-[ferredoxin] + 2 S-adenosyl-L-methionine = 2-methyladenosine(2503) in 23S rRNA + 5'-deoxyadenosine + L-methionine + 2 oxidized [2Fe-2S]-[ferredoxin] + S-adenosyl-L-homocysteine</text>
        <dbReference type="Rhea" id="RHEA:42916"/>
        <dbReference type="Rhea" id="RHEA-COMP:10000"/>
        <dbReference type="Rhea" id="RHEA-COMP:10001"/>
        <dbReference type="Rhea" id="RHEA-COMP:10152"/>
        <dbReference type="Rhea" id="RHEA-COMP:10282"/>
        <dbReference type="ChEBI" id="CHEBI:17319"/>
        <dbReference type="ChEBI" id="CHEBI:33737"/>
        <dbReference type="ChEBI" id="CHEBI:33738"/>
        <dbReference type="ChEBI" id="CHEBI:57844"/>
        <dbReference type="ChEBI" id="CHEBI:57856"/>
        <dbReference type="ChEBI" id="CHEBI:59789"/>
        <dbReference type="ChEBI" id="CHEBI:74411"/>
        <dbReference type="ChEBI" id="CHEBI:74497"/>
        <dbReference type="EC" id="2.1.1.192"/>
    </reaction>
</comment>
<comment type="catalytic activity">
    <reaction evidence="1">
        <text>adenosine(37) in tRNA + 2 reduced [2Fe-2S]-[ferredoxin] + 2 S-adenosyl-L-methionine = 2-methyladenosine(37) in tRNA + 5'-deoxyadenosine + L-methionine + 2 oxidized [2Fe-2S]-[ferredoxin] + S-adenosyl-L-homocysteine</text>
        <dbReference type="Rhea" id="RHEA:43332"/>
        <dbReference type="Rhea" id="RHEA-COMP:10000"/>
        <dbReference type="Rhea" id="RHEA-COMP:10001"/>
        <dbReference type="Rhea" id="RHEA-COMP:10162"/>
        <dbReference type="Rhea" id="RHEA-COMP:10485"/>
        <dbReference type="ChEBI" id="CHEBI:17319"/>
        <dbReference type="ChEBI" id="CHEBI:33737"/>
        <dbReference type="ChEBI" id="CHEBI:33738"/>
        <dbReference type="ChEBI" id="CHEBI:57844"/>
        <dbReference type="ChEBI" id="CHEBI:57856"/>
        <dbReference type="ChEBI" id="CHEBI:59789"/>
        <dbReference type="ChEBI" id="CHEBI:74411"/>
        <dbReference type="ChEBI" id="CHEBI:74497"/>
        <dbReference type="EC" id="2.1.1.192"/>
    </reaction>
</comment>
<comment type="cofactor">
    <cofactor evidence="1">
        <name>[4Fe-4S] cluster</name>
        <dbReference type="ChEBI" id="CHEBI:49883"/>
    </cofactor>
    <text evidence="1">Binds 1 [4Fe-4S] cluster. The cluster is coordinated with 3 cysteines and an exchangeable S-adenosyl-L-methionine.</text>
</comment>
<comment type="subcellular location">
    <subcellularLocation>
        <location evidence="1">Cytoplasm</location>
    </subcellularLocation>
</comment>
<comment type="miscellaneous">
    <text evidence="1">Reaction proceeds by a ping-pong mechanism involving intermediate methylation of a conserved cysteine residue.</text>
</comment>
<comment type="similarity">
    <text evidence="1">Belongs to the radical SAM superfamily. RlmN family.</text>
</comment>
<accession>Q12AB5</accession>
<proteinExistence type="inferred from homology"/>
<organism>
    <name type="scientific">Polaromonas sp. (strain JS666 / ATCC BAA-500)</name>
    <dbReference type="NCBI Taxonomy" id="296591"/>
    <lineage>
        <taxon>Bacteria</taxon>
        <taxon>Pseudomonadati</taxon>
        <taxon>Pseudomonadota</taxon>
        <taxon>Betaproteobacteria</taxon>
        <taxon>Burkholderiales</taxon>
        <taxon>Comamonadaceae</taxon>
        <taxon>Polaromonas</taxon>
    </lineage>
</organism>
<gene>
    <name evidence="1" type="primary">rlmN</name>
    <name type="ordered locus">Bpro_2611</name>
</gene>
<reference key="1">
    <citation type="journal article" date="2008" name="Appl. Environ. Microbiol.">
        <title>The genome of Polaromonas sp. strain JS666: insights into the evolution of a hydrocarbon- and xenobiotic-degrading bacterium, and features of relevance to biotechnology.</title>
        <authorList>
            <person name="Mattes T.E."/>
            <person name="Alexander A.K."/>
            <person name="Richardson P.M."/>
            <person name="Munk A.C."/>
            <person name="Han C.S."/>
            <person name="Stothard P."/>
            <person name="Coleman N.V."/>
        </authorList>
    </citation>
    <scope>NUCLEOTIDE SEQUENCE [LARGE SCALE GENOMIC DNA]</scope>
    <source>
        <strain>JS666 / ATCC BAA-500</strain>
    </source>
</reference>
<feature type="chain" id="PRO_0000350309" description="Dual-specificity RNA methyltransferase RlmN">
    <location>
        <begin position="1"/>
        <end position="382"/>
    </location>
</feature>
<feature type="domain" description="Radical SAM core" evidence="2">
    <location>
        <begin position="97"/>
        <end position="339"/>
    </location>
</feature>
<feature type="active site" description="Proton acceptor" evidence="1">
    <location>
        <position position="91"/>
    </location>
</feature>
<feature type="active site" description="S-methylcysteine intermediate" evidence="1">
    <location>
        <position position="344"/>
    </location>
</feature>
<feature type="binding site" evidence="1">
    <location>
        <position position="111"/>
    </location>
    <ligand>
        <name>[4Fe-4S] cluster</name>
        <dbReference type="ChEBI" id="CHEBI:49883"/>
        <note>4Fe-4S-S-AdoMet</note>
    </ligand>
</feature>
<feature type="binding site" evidence="1">
    <location>
        <position position="115"/>
    </location>
    <ligand>
        <name>[4Fe-4S] cluster</name>
        <dbReference type="ChEBI" id="CHEBI:49883"/>
        <note>4Fe-4S-S-AdoMet</note>
    </ligand>
</feature>
<feature type="binding site" evidence="1">
    <location>
        <position position="118"/>
    </location>
    <ligand>
        <name>[4Fe-4S] cluster</name>
        <dbReference type="ChEBI" id="CHEBI:49883"/>
        <note>4Fe-4S-S-AdoMet</note>
    </ligand>
</feature>
<feature type="binding site" evidence="1">
    <location>
        <begin position="165"/>
        <end position="166"/>
    </location>
    <ligand>
        <name>S-adenosyl-L-methionine</name>
        <dbReference type="ChEBI" id="CHEBI:59789"/>
    </ligand>
</feature>
<feature type="binding site" evidence="1">
    <location>
        <position position="197"/>
    </location>
    <ligand>
        <name>S-adenosyl-L-methionine</name>
        <dbReference type="ChEBI" id="CHEBI:59789"/>
    </ligand>
</feature>
<feature type="binding site" evidence="1">
    <location>
        <begin position="219"/>
        <end position="221"/>
    </location>
    <ligand>
        <name>S-adenosyl-L-methionine</name>
        <dbReference type="ChEBI" id="CHEBI:59789"/>
    </ligand>
</feature>
<feature type="binding site" evidence="1">
    <location>
        <position position="301"/>
    </location>
    <ligand>
        <name>S-adenosyl-L-methionine</name>
        <dbReference type="ChEBI" id="CHEBI:59789"/>
    </ligand>
</feature>
<feature type="disulfide bond" description="(transient)" evidence="1">
    <location>
        <begin position="104"/>
        <end position="344"/>
    </location>
</feature>
<sequence length="382" mass="41678">MTANLLDYDLEGLAAFCEGLGEKRFRATQLFRWIHQKGASDFGQMTDLARSLREKLAGSAHIQGPKVVSRHDSADGTIKWLFDVGAGDVIEAVFIPETDRGTLCISSQAGCAVGCRFCSTGHQGFSRNLTTGEIVSQLWFAEHFLRQHLGRQERVISNVVMMGMGEPLQNYSQLVPALRVMLDDHGYGLSRRRVTVSTSGVVPMIDRLAKDCPVALAVSLHAPQDALRDSLVPLNKKYPIAELLQACTRYQASAPRDFITFEYCMLDGVNDQPEHARQLVALMQNHSAGGLSCKFNLIPFNPFPASGLKRSAMPQVAAFAKILMDAGIVTTVRKTRGDDIDAACGQLAGDVQDRTSVDRRIAAQRQGMLGGIKVVVAKGMDV</sequence>
<evidence type="ECO:0000255" key="1">
    <source>
        <dbReference type="HAMAP-Rule" id="MF_01849"/>
    </source>
</evidence>
<evidence type="ECO:0000255" key="2">
    <source>
        <dbReference type="PROSITE-ProRule" id="PRU01266"/>
    </source>
</evidence>
<protein>
    <recommendedName>
        <fullName evidence="1">Dual-specificity RNA methyltransferase RlmN</fullName>
        <ecNumber evidence="1">2.1.1.192</ecNumber>
    </recommendedName>
    <alternativeName>
        <fullName evidence="1">23S rRNA (adenine(2503)-C(2))-methyltransferase</fullName>
    </alternativeName>
    <alternativeName>
        <fullName evidence="1">23S rRNA m2A2503 methyltransferase</fullName>
    </alternativeName>
    <alternativeName>
        <fullName evidence="1">Ribosomal RNA large subunit methyltransferase N</fullName>
    </alternativeName>
    <alternativeName>
        <fullName evidence="1">tRNA (adenine(37)-C(2))-methyltransferase</fullName>
    </alternativeName>
    <alternativeName>
        <fullName evidence="1">tRNA m2A37 methyltransferase</fullName>
    </alternativeName>
</protein>
<dbReference type="EC" id="2.1.1.192" evidence="1"/>
<dbReference type="EMBL" id="CP000316">
    <property type="protein sequence ID" value="ABE44527.1"/>
    <property type="molecule type" value="Genomic_DNA"/>
</dbReference>
<dbReference type="RefSeq" id="WP_011483525.1">
    <property type="nucleotide sequence ID" value="NC_007948.1"/>
</dbReference>
<dbReference type="SMR" id="Q12AB5"/>
<dbReference type="STRING" id="296591.Bpro_2611"/>
<dbReference type="KEGG" id="pol:Bpro_2611"/>
<dbReference type="eggNOG" id="COG0820">
    <property type="taxonomic scope" value="Bacteria"/>
</dbReference>
<dbReference type="HOGENOM" id="CLU_029101_0_0_4"/>
<dbReference type="OrthoDB" id="9793973at2"/>
<dbReference type="Proteomes" id="UP000001983">
    <property type="component" value="Chromosome"/>
</dbReference>
<dbReference type="GO" id="GO:0005737">
    <property type="term" value="C:cytoplasm"/>
    <property type="evidence" value="ECO:0007669"/>
    <property type="project" value="UniProtKB-SubCell"/>
</dbReference>
<dbReference type="GO" id="GO:0051539">
    <property type="term" value="F:4 iron, 4 sulfur cluster binding"/>
    <property type="evidence" value="ECO:0007669"/>
    <property type="project" value="UniProtKB-UniRule"/>
</dbReference>
<dbReference type="GO" id="GO:0046872">
    <property type="term" value="F:metal ion binding"/>
    <property type="evidence" value="ECO:0007669"/>
    <property type="project" value="UniProtKB-KW"/>
</dbReference>
<dbReference type="GO" id="GO:0070040">
    <property type="term" value="F:rRNA (adenine(2503)-C2-)-methyltransferase activity"/>
    <property type="evidence" value="ECO:0007669"/>
    <property type="project" value="UniProtKB-UniRule"/>
</dbReference>
<dbReference type="GO" id="GO:0019843">
    <property type="term" value="F:rRNA binding"/>
    <property type="evidence" value="ECO:0007669"/>
    <property type="project" value="UniProtKB-UniRule"/>
</dbReference>
<dbReference type="GO" id="GO:0002935">
    <property type="term" value="F:tRNA (adenine(37)-C2)-methyltransferase activity"/>
    <property type="evidence" value="ECO:0007669"/>
    <property type="project" value="UniProtKB-UniRule"/>
</dbReference>
<dbReference type="GO" id="GO:0000049">
    <property type="term" value="F:tRNA binding"/>
    <property type="evidence" value="ECO:0007669"/>
    <property type="project" value="UniProtKB-UniRule"/>
</dbReference>
<dbReference type="GO" id="GO:0070475">
    <property type="term" value="P:rRNA base methylation"/>
    <property type="evidence" value="ECO:0007669"/>
    <property type="project" value="UniProtKB-UniRule"/>
</dbReference>
<dbReference type="GO" id="GO:0030488">
    <property type="term" value="P:tRNA methylation"/>
    <property type="evidence" value="ECO:0007669"/>
    <property type="project" value="UniProtKB-UniRule"/>
</dbReference>
<dbReference type="CDD" id="cd01335">
    <property type="entry name" value="Radical_SAM"/>
    <property type="match status" value="1"/>
</dbReference>
<dbReference type="FunFam" id="1.10.150.530:FF:000003">
    <property type="entry name" value="Dual-specificity RNA methyltransferase RlmN"/>
    <property type="match status" value="1"/>
</dbReference>
<dbReference type="FunFam" id="3.20.20.70:FF:000008">
    <property type="entry name" value="Dual-specificity RNA methyltransferase RlmN"/>
    <property type="match status" value="1"/>
</dbReference>
<dbReference type="Gene3D" id="1.10.150.530">
    <property type="match status" value="1"/>
</dbReference>
<dbReference type="Gene3D" id="3.20.20.70">
    <property type="entry name" value="Aldolase class I"/>
    <property type="match status" value="1"/>
</dbReference>
<dbReference type="HAMAP" id="MF_01849">
    <property type="entry name" value="RNA_methyltr_RlmN"/>
    <property type="match status" value="1"/>
</dbReference>
<dbReference type="InterPro" id="IPR013785">
    <property type="entry name" value="Aldolase_TIM"/>
</dbReference>
<dbReference type="InterPro" id="IPR040072">
    <property type="entry name" value="Methyltransferase_A"/>
</dbReference>
<dbReference type="InterPro" id="IPR048641">
    <property type="entry name" value="RlmN_N"/>
</dbReference>
<dbReference type="InterPro" id="IPR027492">
    <property type="entry name" value="RNA_MTrfase_RlmN"/>
</dbReference>
<dbReference type="InterPro" id="IPR004383">
    <property type="entry name" value="rRNA_lsu_MTrfase_RlmN/Cfr"/>
</dbReference>
<dbReference type="InterPro" id="IPR007197">
    <property type="entry name" value="rSAM"/>
</dbReference>
<dbReference type="NCBIfam" id="TIGR00048">
    <property type="entry name" value="rRNA_mod_RlmN"/>
    <property type="match status" value="1"/>
</dbReference>
<dbReference type="PANTHER" id="PTHR30544">
    <property type="entry name" value="23S RRNA METHYLTRANSFERASE"/>
    <property type="match status" value="1"/>
</dbReference>
<dbReference type="PANTHER" id="PTHR30544:SF5">
    <property type="entry name" value="RADICAL SAM CORE DOMAIN-CONTAINING PROTEIN"/>
    <property type="match status" value="1"/>
</dbReference>
<dbReference type="Pfam" id="PF04055">
    <property type="entry name" value="Radical_SAM"/>
    <property type="match status" value="1"/>
</dbReference>
<dbReference type="Pfam" id="PF21016">
    <property type="entry name" value="RlmN_N"/>
    <property type="match status" value="1"/>
</dbReference>
<dbReference type="PIRSF" id="PIRSF006004">
    <property type="entry name" value="CHP00048"/>
    <property type="match status" value="1"/>
</dbReference>
<dbReference type="SFLD" id="SFLDF00275">
    <property type="entry name" value="adenosine_C2_methyltransferase"/>
    <property type="match status" value="1"/>
</dbReference>
<dbReference type="SFLD" id="SFLDG01062">
    <property type="entry name" value="methyltransferase_(Class_A)"/>
    <property type="match status" value="1"/>
</dbReference>
<dbReference type="SUPFAM" id="SSF102114">
    <property type="entry name" value="Radical SAM enzymes"/>
    <property type="match status" value="1"/>
</dbReference>
<dbReference type="PROSITE" id="PS51918">
    <property type="entry name" value="RADICAL_SAM"/>
    <property type="match status" value="1"/>
</dbReference>
<name>RLMN_POLSJ</name>
<keyword id="KW-0004">4Fe-4S</keyword>
<keyword id="KW-0963">Cytoplasm</keyword>
<keyword id="KW-1015">Disulfide bond</keyword>
<keyword id="KW-0408">Iron</keyword>
<keyword id="KW-0411">Iron-sulfur</keyword>
<keyword id="KW-0479">Metal-binding</keyword>
<keyword id="KW-0489">Methyltransferase</keyword>
<keyword id="KW-1185">Reference proteome</keyword>
<keyword id="KW-0698">rRNA processing</keyword>
<keyword id="KW-0949">S-adenosyl-L-methionine</keyword>
<keyword id="KW-0808">Transferase</keyword>
<keyword id="KW-0819">tRNA processing</keyword>